<feature type="chain" id="PRO_1000075022" description="5'-nucleotidase SurE">
    <location>
        <begin position="1"/>
        <end position="245"/>
    </location>
</feature>
<feature type="binding site" evidence="1">
    <location>
        <position position="8"/>
    </location>
    <ligand>
        <name>a divalent metal cation</name>
        <dbReference type="ChEBI" id="CHEBI:60240"/>
    </ligand>
</feature>
<feature type="binding site" evidence="1">
    <location>
        <position position="9"/>
    </location>
    <ligand>
        <name>a divalent metal cation</name>
        <dbReference type="ChEBI" id="CHEBI:60240"/>
    </ligand>
</feature>
<feature type="binding site" evidence="1">
    <location>
        <position position="39"/>
    </location>
    <ligand>
        <name>a divalent metal cation</name>
        <dbReference type="ChEBI" id="CHEBI:60240"/>
    </ligand>
</feature>
<feature type="binding site" evidence="1">
    <location>
        <position position="97"/>
    </location>
    <ligand>
        <name>a divalent metal cation</name>
        <dbReference type="ChEBI" id="CHEBI:60240"/>
    </ligand>
</feature>
<proteinExistence type="inferred from homology"/>
<name>SURE_CLOK5</name>
<reference key="1">
    <citation type="journal article" date="2008" name="Proc. Natl. Acad. Sci. U.S.A.">
        <title>The genome of Clostridium kluyveri, a strict anaerobe with unique metabolic features.</title>
        <authorList>
            <person name="Seedorf H."/>
            <person name="Fricke W.F."/>
            <person name="Veith B."/>
            <person name="Brueggemann H."/>
            <person name="Liesegang H."/>
            <person name="Strittmatter A."/>
            <person name="Miethke M."/>
            <person name="Buckel W."/>
            <person name="Hinderberger J."/>
            <person name="Li F."/>
            <person name="Hagemeier C."/>
            <person name="Thauer R.K."/>
            <person name="Gottschalk G."/>
        </authorList>
    </citation>
    <scope>NUCLEOTIDE SEQUENCE [LARGE SCALE GENOMIC DNA]</scope>
    <source>
        <strain>ATCC 8527 / DSM 555 / NBRC 12016 / NCIMB 10680 / K1</strain>
    </source>
</reference>
<comment type="function">
    <text evidence="1">Nucleotidase that shows phosphatase activity on nucleoside 5'-monophosphates.</text>
</comment>
<comment type="catalytic activity">
    <reaction evidence="1">
        <text>a ribonucleoside 5'-phosphate + H2O = a ribonucleoside + phosphate</text>
        <dbReference type="Rhea" id="RHEA:12484"/>
        <dbReference type="ChEBI" id="CHEBI:15377"/>
        <dbReference type="ChEBI" id="CHEBI:18254"/>
        <dbReference type="ChEBI" id="CHEBI:43474"/>
        <dbReference type="ChEBI" id="CHEBI:58043"/>
        <dbReference type="EC" id="3.1.3.5"/>
    </reaction>
</comment>
<comment type="cofactor">
    <cofactor evidence="1">
        <name>a divalent metal cation</name>
        <dbReference type="ChEBI" id="CHEBI:60240"/>
    </cofactor>
    <text evidence="1">Binds 1 divalent metal cation per subunit.</text>
</comment>
<comment type="subcellular location">
    <subcellularLocation>
        <location evidence="1">Cytoplasm</location>
    </subcellularLocation>
</comment>
<comment type="similarity">
    <text evidence="1">Belongs to the SurE nucleotidase family.</text>
</comment>
<organism>
    <name type="scientific">Clostridium kluyveri (strain ATCC 8527 / DSM 555 / NBRC 12016 / NCIMB 10680 / K1)</name>
    <dbReference type="NCBI Taxonomy" id="431943"/>
    <lineage>
        <taxon>Bacteria</taxon>
        <taxon>Bacillati</taxon>
        <taxon>Bacillota</taxon>
        <taxon>Clostridia</taxon>
        <taxon>Eubacteriales</taxon>
        <taxon>Clostridiaceae</taxon>
        <taxon>Clostridium</taxon>
    </lineage>
</organism>
<gene>
    <name evidence="1" type="primary">surE</name>
    <name type="ordered locus">CKL_0997</name>
</gene>
<dbReference type="EC" id="3.1.3.5" evidence="1"/>
<dbReference type="EMBL" id="CP000673">
    <property type="protein sequence ID" value="EDK33039.1"/>
    <property type="molecule type" value="Genomic_DNA"/>
</dbReference>
<dbReference type="RefSeq" id="WP_012101369.1">
    <property type="nucleotide sequence ID" value="NC_009706.1"/>
</dbReference>
<dbReference type="SMR" id="A5N6V8"/>
<dbReference type="STRING" id="431943.CKL_0997"/>
<dbReference type="KEGG" id="ckl:CKL_0997"/>
<dbReference type="eggNOG" id="COG0496">
    <property type="taxonomic scope" value="Bacteria"/>
</dbReference>
<dbReference type="HOGENOM" id="CLU_045192_1_3_9"/>
<dbReference type="Proteomes" id="UP000002411">
    <property type="component" value="Chromosome"/>
</dbReference>
<dbReference type="GO" id="GO:0005737">
    <property type="term" value="C:cytoplasm"/>
    <property type="evidence" value="ECO:0007669"/>
    <property type="project" value="UniProtKB-SubCell"/>
</dbReference>
<dbReference type="GO" id="GO:0008254">
    <property type="term" value="F:3'-nucleotidase activity"/>
    <property type="evidence" value="ECO:0007669"/>
    <property type="project" value="TreeGrafter"/>
</dbReference>
<dbReference type="GO" id="GO:0008253">
    <property type="term" value="F:5'-nucleotidase activity"/>
    <property type="evidence" value="ECO:0007669"/>
    <property type="project" value="UniProtKB-UniRule"/>
</dbReference>
<dbReference type="GO" id="GO:0004309">
    <property type="term" value="F:exopolyphosphatase activity"/>
    <property type="evidence" value="ECO:0007669"/>
    <property type="project" value="TreeGrafter"/>
</dbReference>
<dbReference type="GO" id="GO:0046872">
    <property type="term" value="F:metal ion binding"/>
    <property type="evidence" value="ECO:0007669"/>
    <property type="project" value="UniProtKB-UniRule"/>
</dbReference>
<dbReference type="GO" id="GO:0000166">
    <property type="term" value="F:nucleotide binding"/>
    <property type="evidence" value="ECO:0007669"/>
    <property type="project" value="UniProtKB-KW"/>
</dbReference>
<dbReference type="Gene3D" id="3.40.1210.10">
    <property type="entry name" value="Survival protein SurE-like phosphatase/nucleotidase"/>
    <property type="match status" value="1"/>
</dbReference>
<dbReference type="HAMAP" id="MF_00060">
    <property type="entry name" value="SurE"/>
    <property type="match status" value="1"/>
</dbReference>
<dbReference type="InterPro" id="IPR030048">
    <property type="entry name" value="SurE"/>
</dbReference>
<dbReference type="InterPro" id="IPR002828">
    <property type="entry name" value="SurE-like_Pase/nucleotidase"/>
</dbReference>
<dbReference type="InterPro" id="IPR036523">
    <property type="entry name" value="SurE-like_sf"/>
</dbReference>
<dbReference type="NCBIfam" id="NF010543">
    <property type="entry name" value="PRK13933.1"/>
    <property type="match status" value="1"/>
</dbReference>
<dbReference type="NCBIfam" id="TIGR00087">
    <property type="entry name" value="surE"/>
    <property type="match status" value="1"/>
</dbReference>
<dbReference type="PANTHER" id="PTHR30457">
    <property type="entry name" value="5'-NUCLEOTIDASE SURE"/>
    <property type="match status" value="1"/>
</dbReference>
<dbReference type="PANTHER" id="PTHR30457:SF12">
    <property type="entry name" value="5'_3'-NUCLEOTIDASE SURE"/>
    <property type="match status" value="1"/>
</dbReference>
<dbReference type="Pfam" id="PF01975">
    <property type="entry name" value="SurE"/>
    <property type="match status" value="1"/>
</dbReference>
<dbReference type="SUPFAM" id="SSF64167">
    <property type="entry name" value="SurE-like"/>
    <property type="match status" value="1"/>
</dbReference>
<evidence type="ECO:0000255" key="1">
    <source>
        <dbReference type="HAMAP-Rule" id="MF_00060"/>
    </source>
</evidence>
<accession>A5N6V8</accession>
<sequence length="245" mass="27106">MRLLLTNDDGIMAEGIQVLAKHFEKDNEVIIAAPDVQRSGSGHCITTVPGELIIQEVKLEGINSKAYSITGTPADCARLGVRKLGNNQIDMVISGINNGFNLGIDSLYSGTVSAAIEAAICETPSIAVSLDTKGGNYDYNIAAEYALEVFSIYKDKYKNKDENVVLSLNVPCLPREKIKGLKVCRVGFKYHLQEIYDKGEKTEELSYNYTDIYYVKRGYAALSPLHYDLTNYKILGDINNLFTEK</sequence>
<protein>
    <recommendedName>
        <fullName evidence="1">5'-nucleotidase SurE</fullName>
        <ecNumber evidence="1">3.1.3.5</ecNumber>
    </recommendedName>
    <alternativeName>
        <fullName evidence="1">Nucleoside 5'-monophosphate phosphohydrolase</fullName>
    </alternativeName>
</protein>
<keyword id="KW-0963">Cytoplasm</keyword>
<keyword id="KW-0378">Hydrolase</keyword>
<keyword id="KW-0479">Metal-binding</keyword>
<keyword id="KW-0547">Nucleotide-binding</keyword>
<keyword id="KW-1185">Reference proteome</keyword>